<organism>
    <name type="scientific">Human papillomavirus 15</name>
    <dbReference type="NCBI Taxonomy" id="10606"/>
    <lineage>
        <taxon>Viruses</taxon>
        <taxon>Monodnaviria</taxon>
        <taxon>Shotokuvirae</taxon>
        <taxon>Cossaviricota</taxon>
        <taxon>Papovaviricetes</taxon>
        <taxon>Zurhausenvirales</taxon>
        <taxon>Papillomaviridae</taxon>
        <taxon>Firstpapillomavirinae</taxon>
        <taxon>Betapapillomavirus</taxon>
        <taxon>Betapapillomavirus 2</taxon>
    </lineage>
</organism>
<keyword id="KW-0010">Activator</keyword>
<keyword id="KW-0238">DNA-binding</keyword>
<keyword id="KW-0244">Early protein</keyword>
<keyword id="KW-1078">G1/S host cell cycle checkpoint dysregulation by virus</keyword>
<keyword id="KW-1035">Host cytoplasm</keyword>
<keyword id="KW-1048">Host nucleus</keyword>
<keyword id="KW-0945">Host-virus interaction</keyword>
<keyword id="KW-1090">Inhibition of host innate immune response by virus</keyword>
<keyword id="KW-1114">Inhibition of host interferon signaling pathway by virus</keyword>
<keyword id="KW-0922">Interferon antiviral system evasion</keyword>
<keyword id="KW-0479">Metal-binding</keyword>
<keyword id="KW-1121">Modulation of host cell cycle by virus</keyword>
<keyword id="KW-0553">Oncogene</keyword>
<keyword id="KW-1185">Reference proteome</keyword>
<keyword id="KW-0804">Transcription</keyword>
<keyword id="KW-0805">Transcription regulation</keyword>
<keyword id="KW-0899">Viral immunoevasion</keyword>
<keyword id="KW-0862">Zinc</keyword>
<keyword id="KW-0863">Zinc-finger</keyword>
<name>VE7_HPV15</name>
<gene>
    <name evidence="1" type="primary">E7</name>
</gene>
<accession>P36820</accession>
<feature type="chain" id="PRO_0000133413" description="Protein E7">
    <location>
        <begin position="1"/>
        <end position="93"/>
    </location>
</feature>
<feature type="zinc finger region" evidence="1">
    <location>
        <begin position="50"/>
        <end position="86"/>
    </location>
</feature>
<feature type="region of interest" description="E7 terminal domain" evidence="1">
    <location>
        <begin position="1"/>
        <end position="42"/>
    </location>
</feature>
<feature type="short sequence motif" description="LXCXE motif; interaction with host RB1 and TMEM173/STING" evidence="1">
    <location>
        <begin position="24"/>
        <end position="28"/>
    </location>
</feature>
<feature type="short sequence motif" description="Nuclear export signal" evidence="1">
    <location>
        <begin position="68"/>
        <end position="76"/>
    </location>
</feature>
<evidence type="ECO:0000255" key="1">
    <source>
        <dbReference type="HAMAP-Rule" id="MF_04004"/>
    </source>
</evidence>
<comment type="function">
    <text evidence="1">Plays a role in viral genome replication by driving entry of quiescent cells into the cell cycle. Stimulation of progression from G1 to S phase allows the virus to efficiently use the cellular DNA replicating machinery to achieve viral genome replication. E7 protein has both transforming and trans-activating activities. Induces the disassembly of the E2F1 transcription factor from RB1, with subsequent transcriptional activation of E2F1-regulated S-phase genes. Interferes with host histone deacetylation mediated by HDAC1 and HDAC2, leading to transcription activation. Also plays a role in the inhibition of both antiviral and antiproliferative functions of host interferon alpha. Interaction with host TMEM173/STING impairs the ability of TMEM173/STING to sense cytosolic DNA and promote the production of type I interferon (IFN-alpha and IFN-beta).</text>
</comment>
<comment type="subunit">
    <text evidence="1">Homodimer. Homooligomer. Interacts with host RB1; this interaction induces dissociation of RB1-E2F1 complex thereby disrupting RB1 activity. Interacts with host EP300; this interaction represses EP300 transcriptional activity. Interacts with protein E2; this interaction inhibits E7 oncogenic activity. Interacts with host TMEM173/STING; this interaction impairs the ability of TMEM173/STING to sense cytosolic DNA and promote the production of type I interferon (IFN-alpha and IFN-beta).</text>
</comment>
<comment type="subcellular location">
    <subcellularLocation>
        <location evidence="1">Host cytoplasm</location>
    </subcellularLocation>
    <subcellularLocation>
        <location evidence="1">Host nucleus</location>
    </subcellularLocation>
    <text evidence="1">Predominantly found in the host nucleus.</text>
</comment>
<comment type="domain">
    <text evidence="1">The E7 terminal domain is an intrinsically disordered domain, whose flexibility and conformational transitions confer target adaptability to the oncoprotein. It allows adaptation to a variety of protein targets and exposes the PEST degradation sequence that regulates its turnover in the cell.</text>
</comment>
<comment type="PTM">
    <text evidence="1">Highly phosphorylated.</text>
</comment>
<comment type="similarity">
    <text evidence="1">Belongs to the papillomaviridae E7 protein family.</text>
</comment>
<organismHost>
    <name type="scientific">Homo sapiens</name>
    <name type="common">Human</name>
    <dbReference type="NCBI Taxonomy" id="9606"/>
</organismHost>
<protein>
    <recommendedName>
        <fullName evidence="1">Protein E7</fullName>
    </recommendedName>
</protein>
<sequence>MIGKEATIPDIVLELQELVQPTDLHCYEELSEEETEEEPRFIPYKIVVPCCFCDSKLRLIVVATPFGIRSQQDLLLEEVKLVCPGCREKLRHV</sequence>
<reference key="1">
    <citation type="journal article" date="1994" name="Curr. Top. Microbiol. Immunol.">
        <title>Primer-directed sequencing of human papillomavirus types.</title>
        <authorList>
            <person name="Delius H."/>
            <person name="Hofmann B."/>
        </authorList>
    </citation>
    <scope>NUCLEOTIDE SEQUENCE [GENOMIC DNA]</scope>
</reference>
<reference key="2">
    <citation type="journal article" date="2002" name="Rev. Med. Virol.">
        <title>Interactions of SV40 large T antigen and other viral proteins with retinoblastoma tumour suppressor.</title>
        <authorList>
            <person name="Lee C."/>
            <person name="Cho Y."/>
        </authorList>
    </citation>
    <scope>REVIEW</scope>
</reference>
<dbReference type="EMBL" id="X74468">
    <property type="protein sequence ID" value="CAA52507.1"/>
    <property type="molecule type" value="Genomic_DNA"/>
</dbReference>
<dbReference type="PIR" id="S36474">
    <property type="entry name" value="S36474"/>
</dbReference>
<dbReference type="SMR" id="P36820"/>
<dbReference type="Proteomes" id="UP000008232">
    <property type="component" value="Genome"/>
</dbReference>
<dbReference type="GO" id="GO:0030430">
    <property type="term" value="C:host cell cytoplasm"/>
    <property type="evidence" value="ECO:0007669"/>
    <property type="project" value="UniProtKB-SubCell"/>
</dbReference>
<dbReference type="GO" id="GO:0042025">
    <property type="term" value="C:host cell nucleus"/>
    <property type="evidence" value="ECO:0007669"/>
    <property type="project" value="UniProtKB-SubCell"/>
</dbReference>
<dbReference type="GO" id="GO:0003677">
    <property type="term" value="F:DNA binding"/>
    <property type="evidence" value="ECO:0007669"/>
    <property type="project" value="UniProtKB-UniRule"/>
</dbReference>
<dbReference type="GO" id="GO:0003700">
    <property type="term" value="F:DNA-binding transcription factor activity"/>
    <property type="evidence" value="ECO:0007669"/>
    <property type="project" value="UniProtKB-UniRule"/>
</dbReference>
<dbReference type="GO" id="GO:0019904">
    <property type="term" value="F:protein domain specific binding"/>
    <property type="evidence" value="ECO:0007669"/>
    <property type="project" value="UniProtKB-UniRule"/>
</dbReference>
<dbReference type="GO" id="GO:0008270">
    <property type="term" value="F:zinc ion binding"/>
    <property type="evidence" value="ECO:0007669"/>
    <property type="project" value="UniProtKB-KW"/>
</dbReference>
<dbReference type="GO" id="GO:0006351">
    <property type="term" value="P:DNA-templated transcription"/>
    <property type="evidence" value="ECO:0007669"/>
    <property type="project" value="UniProtKB-UniRule"/>
</dbReference>
<dbReference type="GO" id="GO:0039645">
    <property type="term" value="P:symbiont-mediated perturbation of host cell cycle G1/S transition checkpoint"/>
    <property type="evidence" value="ECO:0007669"/>
    <property type="project" value="UniProtKB-UniRule"/>
</dbReference>
<dbReference type="GO" id="GO:0052170">
    <property type="term" value="P:symbiont-mediated suppression of host innate immune response"/>
    <property type="evidence" value="ECO:0007669"/>
    <property type="project" value="UniProtKB-KW"/>
</dbReference>
<dbReference type="GO" id="GO:0039502">
    <property type="term" value="P:symbiont-mediated suppression of host type I interferon-mediated signaling pathway"/>
    <property type="evidence" value="ECO:0007669"/>
    <property type="project" value="UniProtKB-UniRule"/>
</dbReference>
<dbReference type="Gene3D" id="3.30.160.330">
    <property type="match status" value="1"/>
</dbReference>
<dbReference type="HAMAP" id="MF_04004">
    <property type="entry name" value="PPV_E7"/>
    <property type="match status" value="1"/>
</dbReference>
<dbReference type="InterPro" id="IPR000148">
    <property type="entry name" value="Papilloma_E7"/>
</dbReference>
<dbReference type="Pfam" id="PF00527">
    <property type="entry name" value="E7"/>
    <property type="match status" value="1"/>
</dbReference>
<dbReference type="PIRSF" id="PIRSF003407">
    <property type="entry name" value="Papvi_E7"/>
    <property type="match status" value="1"/>
</dbReference>
<dbReference type="SUPFAM" id="SSF161234">
    <property type="entry name" value="E7 C-terminal domain-like"/>
    <property type="match status" value="1"/>
</dbReference>
<proteinExistence type="inferred from homology"/>